<proteinExistence type="inferred from homology"/>
<name>MNMG_ACIBY</name>
<dbReference type="EMBL" id="CU459141">
    <property type="protein sequence ID" value="CAM86287.1"/>
    <property type="molecule type" value="Genomic_DNA"/>
</dbReference>
<dbReference type="RefSeq" id="WP_000559191.1">
    <property type="nucleotide sequence ID" value="NC_010410.1"/>
</dbReference>
<dbReference type="SMR" id="B0V7I0"/>
<dbReference type="EnsemblBacteria" id="CAM86287">
    <property type="protein sequence ID" value="CAM86287"/>
    <property type="gene ID" value="ABAYE1373"/>
</dbReference>
<dbReference type="KEGG" id="aby:ABAYE1373"/>
<dbReference type="HOGENOM" id="CLU_007831_2_2_6"/>
<dbReference type="GO" id="GO:0005829">
    <property type="term" value="C:cytosol"/>
    <property type="evidence" value="ECO:0007669"/>
    <property type="project" value="TreeGrafter"/>
</dbReference>
<dbReference type="GO" id="GO:0050660">
    <property type="term" value="F:flavin adenine dinucleotide binding"/>
    <property type="evidence" value="ECO:0007669"/>
    <property type="project" value="UniProtKB-UniRule"/>
</dbReference>
<dbReference type="GO" id="GO:0030488">
    <property type="term" value="P:tRNA methylation"/>
    <property type="evidence" value="ECO:0007669"/>
    <property type="project" value="TreeGrafter"/>
</dbReference>
<dbReference type="GO" id="GO:0002098">
    <property type="term" value="P:tRNA wobble uridine modification"/>
    <property type="evidence" value="ECO:0007669"/>
    <property type="project" value="InterPro"/>
</dbReference>
<dbReference type="FunFam" id="1.10.10.1800:FF:000001">
    <property type="entry name" value="tRNA uridine 5-carboxymethylaminomethyl modification enzyme MnmG"/>
    <property type="match status" value="1"/>
</dbReference>
<dbReference type="FunFam" id="1.10.150.570:FF:000001">
    <property type="entry name" value="tRNA uridine 5-carboxymethylaminomethyl modification enzyme MnmG"/>
    <property type="match status" value="1"/>
</dbReference>
<dbReference type="FunFam" id="3.50.50.60:FF:000002">
    <property type="entry name" value="tRNA uridine 5-carboxymethylaminomethyl modification enzyme MnmG"/>
    <property type="match status" value="1"/>
</dbReference>
<dbReference type="FunFam" id="3.50.50.60:FF:000010">
    <property type="entry name" value="tRNA uridine 5-carboxymethylaminomethyl modification enzyme MnmG"/>
    <property type="match status" value="1"/>
</dbReference>
<dbReference type="Gene3D" id="3.50.50.60">
    <property type="entry name" value="FAD/NAD(P)-binding domain"/>
    <property type="match status" value="2"/>
</dbReference>
<dbReference type="Gene3D" id="1.10.150.570">
    <property type="entry name" value="GidA associated domain, C-terminal subdomain"/>
    <property type="match status" value="1"/>
</dbReference>
<dbReference type="Gene3D" id="1.10.10.1800">
    <property type="entry name" value="tRNA uridine 5-carboxymethylaminomethyl modification enzyme MnmG/GidA"/>
    <property type="match status" value="1"/>
</dbReference>
<dbReference type="HAMAP" id="MF_00129">
    <property type="entry name" value="MnmG_GidA"/>
    <property type="match status" value="1"/>
</dbReference>
<dbReference type="InterPro" id="IPR036188">
    <property type="entry name" value="FAD/NAD-bd_sf"/>
</dbReference>
<dbReference type="InterPro" id="IPR049312">
    <property type="entry name" value="GIDA_C_N"/>
</dbReference>
<dbReference type="InterPro" id="IPR004416">
    <property type="entry name" value="MnmG"/>
</dbReference>
<dbReference type="InterPro" id="IPR002218">
    <property type="entry name" value="MnmG-rel"/>
</dbReference>
<dbReference type="InterPro" id="IPR020595">
    <property type="entry name" value="MnmG-rel_CS"/>
</dbReference>
<dbReference type="InterPro" id="IPR026904">
    <property type="entry name" value="MnmG_C"/>
</dbReference>
<dbReference type="InterPro" id="IPR047001">
    <property type="entry name" value="MnmG_C_subdom"/>
</dbReference>
<dbReference type="InterPro" id="IPR044920">
    <property type="entry name" value="MnmG_C_subdom_sf"/>
</dbReference>
<dbReference type="InterPro" id="IPR040131">
    <property type="entry name" value="MnmG_N"/>
</dbReference>
<dbReference type="NCBIfam" id="TIGR00136">
    <property type="entry name" value="mnmG_gidA"/>
    <property type="match status" value="1"/>
</dbReference>
<dbReference type="PANTHER" id="PTHR11806">
    <property type="entry name" value="GLUCOSE INHIBITED DIVISION PROTEIN A"/>
    <property type="match status" value="1"/>
</dbReference>
<dbReference type="PANTHER" id="PTHR11806:SF0">
    <property type="entry name" value="PROTEIN MTO1 HOMOLOG, MITOCHONDRIAL"/>
    <property type="match status" value="1"/>
</dbReference>
<dbReference type="Pfam" id="PF01134">
    <property type="entry name" value="GIDA"/>
    <property type="match status" value="1"/>
</dbReference>
<dbReference type="Pfam" id="PF21680">
    <property type="entry name" value="GIDA_C_1st"/>
    <property type="match status" value="1"/>
</dbReference>
<dbReference type="Pfam" id="PF13932">
    <property type="entry name" value="SAM_GIDA_C"/>
    <property type="match status" value="1"/>
</dbReference>
<dbReference type="SMART" id="SM01228">
    <property type="entry name" value="GIDA_assoc_3"/>
    <property type="match status" value="1"/>
</dbReference>
<dbReference type="SUPFAM" id="SSF51905">
    <property type="entry name" value="FAD/NAD(P)-binding domain"/>
    <property type="match status" value="1"/>
</dbReference>
<dbReference type="PROSITE" id="PS01280">
    <property type="entry name" value="GIDA_1"/>
    <property type="match status" value="1"/>
</dbReference>
<dbReference type="PROSITE" id="PS01281">
    <property type="entry name" value="GIDA_2"/>
    <property type="match status" value="1"/>
</dbReference>
<feature type="chain" id="PRO_0000345236" description="tRNA uridine 5-carboxymethylaminomethyl modification enzyme MnmG">
    <location>
        <begin position="1"/>
        <end position="626"/>
    </location>
</feature>
<feature type="binding site" evidence="1">
    <location>
        <begin position="13"/>
        <end position="18"/>
    </location>
    <ligand>
        <name>FAD</name>
        <dbReference type="ChEBI" id="CHEBI:57692"/>
    </ligand>
</feature>
<feature type="binding site" evidence="1">
    <location>
        <begin position="273"/>
        <end position="287"/>
    </location>
    <ligand>
        <name>NAD(+)</name>
        <dbReference type="ChEBI" id="CHEBI:57540"/>
    </ligand>
</feature>
<evidence type="ECO:0000255" key="1">
    <source>
        <dbReference type="HAMAP-Rule" id="MF_00129"/>
    </source>
</evidence>
<reference key="1">
    <citation type="journal article" date="2008" name="PLoS ONE">
        <title>Comparative analysis of Acinetobacters: three genomes for three lifestyles.</title>
        <authorList>
            <person name="Vallenet D."/>
            <person name="Nordmann P."/>
            <person name="Barbe V."/>
            <person name="Poirel L."/>
            <person name="Mangenot S."/>
            <person name="Bataille E."/>
            <person name="Dossat C."/>
            <person name="Gas S."/>
            <person name="Kreimeyer A."/>
            <person name="Lenoble P."/>
            <person name="Oztas S."/>
            <person name="Poulain J."/>
            <person name="Segurens B."/>
            <person name="Robert C."/>
            <person name="Abergel C."/>
            <person name="Claverie J.-M."/>
            <person name="Raoult D."/>
            <person name="Medigue C."/>
            <person name="Weissenbach J."/>
            <person name="Cruveiller S."/>
        </authorList>
    </citation>
    <scope>NUCLEOTIDE SEQUENCE [LARGE SCALE GENOMIC DNA]</scope>
    <source>
        <strain>AYE</strain>
    </source>
</reference>
<protein>
    <recommendedName>
        <fullName evidence="1">tRNA uridine 5-carboxymethylaminomethyl modification enzyme MnmG</fullName>
    </recommendedName>
    <alternativeName>
        <fullName evidence="1">Glucose-inhibited division protein A</fullName>
    </alternativeName>
</protein>
<keyword id="KW-0963">Cytoplasm</keyword>
<keyword id="KW-0274">FAD</keyword>
<keyword id="KW-0285">Flavoprotein</keyword>
<keyword id="KW-0520">NAD</keyword>
<keyword id="KW-0819">tRNA processing</keyword>
<gene>
    <name evidence="1" type="primary">mnmG</name>
    <name evidence="1" type="synonym">gidA</name>
    <name type="ordered locus">ABAYE1373</name>
</gene>
<accession>B0V7I0</accession>
<sequence length="626" mass="69062">MHYPKVYDVIVIGGGHAGTEAALAAARMGRQTLLLTHNIETLGQMSCNPAIGGIGKSHLVREIDALGGAMALAADKGGIQFRILNSRKGAAVRATRAQADRVRYKAAIRETLENQANLDIFQQAADDLIVEGDTVKGVVTQMGIRFDAKTVVLTTGTFLGGVIHVGLEKSSGGRAGDPPSIALAQRLRELKLPVGRLKTGTPPRIDARSVDFSVMTTQPGDFPSPVMSFMGDVSMHPEQVNCYITHTNEKTHDIIRGGLDRSPMYTGVIEGVGPRYCPSIEDKIHRFSDKDSHQVFLEPEGLDTHELYPNGISTSLPFDVQFELVRSIRGMENAHILRPGYAIEYDYFNPQALKFTLETKAINGLYFAGQINGTTGYEEAGAQGLLAGLNAARRAWEQEEWTPKRDQAYMGVLVDDLITLGTKEPYRMFTSRAEYRLMLREDNADQRLTTIGRELGLVDDVRWAAYCEKMEAVERETSRLQHVWAAPNNPMGKKFVEMTGADLSKECSAIDLLKRPNINFGQIAELTGSEVSQQVGEQIEIAVKYEGYINRQHEDVAQLKRLEETKIPADFDYDVVSGLSREITQKLKTVRPETLAQASRIPGVTPAAVQLVMITIRKNNMTKKTA</sequence>
<organism>
    <name type="scientific">Acinetobacter baumannii (strain AYE)</name>
    <dbReference type="NCBI Taxonomy" id="509173"/>
    <lineage>
        <taxon>Bacteria</taxon>
        <taxon>Pseudomonadati</taxon>
        <taxon>Pseudomonadota</taxon>
        <taxon>Gammaproteobacteria</taxon>
        <taxon>Moraxellales</taxon>
        <taxon>Moraxellaceae</taxon>
        <taxon>Acinetobacter</taxon>
        <taxon>Acinetobacter calcoaceticus/baumannii complex</taxon>
    </lineage>
</organism>
<comment type="function">
    <text evidence="1">NAD-binding protein involved in the addition of a carboxymethylaminomethyl (cmnm) group at the wobble position (U34) of certain tRNAs, forming tRNA-cmnm(5)s(2)U34.</text>
</comment>
<comment type="cofactor">
    <cofactor evidence="1">
        <name>FAD</name>
        <dbReference type="ChEBI" id="CHEBI:57692"/>
    </cofactor>
</comment>
<comment type="subunit">
    <text evidence="1">Homodimer. Heterotetramer of two MnmE and two MnmG subunits.</text>
</comment>
<comment type="subcellular location">
    <subcellularLocation>
        <location evidence="1">Cytoplasm</location>
    </subcellularLocation>
</comment>
<comment type="similarity">
    <text evidence="1">Belongs to the MnmG family.</text>
</comment>